<geneLocation type="mitochondrion"/>
<sequence>MTNIRKTHPLLKIVNDSLVDLPVPSSVSSWWNFGSLLAACLAVQILTGLFLAMHYTSDTATAFNSVTHICRDVNYGWILRYLHANGASMFFICLYIHVGRGLYYGSYMYSETWNIGILLLFAVMATAFMGYVLPWGQMSFWGATVITNLLSAIPYIGTDLVQWIWGGFSVDKATLTRFFAFHFLLPFIIAALVVVHLLFLHETGSSNPTGIPSDPDMVPFHPYHTIKDILGILMMLTALSMLVLFSPDLLGDPDNYIPANPLNTPPHIKPEWYFLFAYAILRSIPNKLGGVLALVLSILILAVIPLLHTSKQRSMMFRPLSQCMFWLLVADLLTLTWIGGQPVEHPYIIIGQMASILYFTIILLLMPLASMMENHLLKW</sequence>
<keyword id="KW-0249">Electron transport</keyword>
<keyword id="KW-0349">Heme</keyword>
<keyword id="KW-0408">Iron</keyword>
<keyword id="KW-0472">Membrane</keyword>
<keyword id="KW-0479">Metal-binding</keyword>
<keyword id="KW-0496">Mitochondrion</keyword>
<keyword id="KW-0999">Mitochondrion inner membrane</keyword>
<keyword id="KW-0679">Respiratory chain</keyword>
<keyword id="KW-0812">Transmembrane</keyword>
<keyword id="KW-1133">Transmembrane helix</keyword>
<keyword id="KW-0813">Transport</keyword>
<keyword id="KW-0830">Ubiquinone</keyword>
<name>CYB_PTEGY</name>
<comment type="function">
    <text evidence="2">Component of the ubiquinol-cytochrome c reductase complex (complex III or cytochrome b-c1 complex) that is part of the mitochondrial respiratory chain. The b-c1 complex mediates electron transfer from ubiquinol to cytochrome c. Contributes to the generation of a proton gradient across the mitochondrial membrane that is then used for ATP synthesis.</text>
</comment>
<comment type="cofactor">
    <cofactor evidence="2">
        <name>heme b</name>
        <dbReference type="ChEBI" id="CHEBI:60344"/>
    </cofactor>
    <text evidence="2">Binds 2 heme b groups non-covalently.</text>
</comment>
<comment type="subunit">
    <text evidence="2">The cytochrome bc1 complex contains 11 subunits: 3 respiratory subunits (MT-CYB, CYC1 and UQCRFS1), 2 core proteins (UQCRC1 and UQCRC2) and 6 low-molecular weight proteins (UQCRH/QCR6, UQCRB/QCR7, UQCRQ/QCR8, UQCR10/QCR9, UQCR11/QCR10 and a cleavage product of UQCRFS1). This cytochrome bc1 complex then forms a dimer.</text>
</comment>
<comment type="subcellular location">
    <subcellularLocation>
        <location evidence="2">Mitochondrion inner membrane</location>
        <topology evidence="2">Multi-pass membrane protein</topology>
    </subcellularLocation>
</comment>
<comment type="miscellaneous">
    <text evidence="1">Heme 1 (or BL or b562) is low-potential and absorbs at about 562 nm, and heme 2 (or BH or b566) is high-potential and absorbs at about 566 nm.</text>
</comment>
<comment type="similarity">
    <text evidence="3 4">Belongs to the cytochrome b family.</text>
</comment>
<comment type="caution">
    <text evidence="2">The full-length protein contains only eight transmembrane helices, not nine as predicted by bioinformatics tools.</text>
</comment>
<feature type="chain" id="PRO_0000061458" description="Cytochrome b">
    <location>
        <begin position="1"/>
        <end position="379"/>
    </location>
</feature>
<feature type="transmembrane region" description="Helical" evidence="2">
    <location>
        <begin position="33"/>
        <end position="53"/>
    </location>
</feature>
<feature type="transmembrane region" description="Helical" evidence="2">
    <location>
        <begin position="77"/>
        <end position="98"/>
    </location>
</feature>
<feature type="transmembrane region" description="Helical" evidence="2">
    <location>
        <begin position="113"/>
        <end position="133"/>
    </location>
</feature>
<feature type="transmembrane region" description="Helical" evidence="2">
    <location>
        <begin position="178"/>
        <end position="198"/>
    </location>
</feature>
<feature type="transmembrane region" description="Helical" evidence="2">
    <location>
        <begin position="226"/>
        <end position="246"/>
    </location>
</feature>
<feature type="transmembrane region" description="Helical" evidence="2">
    <location>
        <begin position="288"/>
        <end position="308"/>
    </location>
</feature>
<feature type="transmembrane region" description="Helical" evidence="2">
    <location>
        <begin position="320"/>
        <end position="340"/>
    </location>
</feature>
<feature type="transmembrane region" description="Helical" evidence="2">
    <location>
        <begin position="347"/>
        <end position="367"/>
    </location>
</feature>
<feature type="binding site" description="axial binding residue" evidence="2">
    <location>
        <position position="83"/>
    </location>
    <ligand>
        <name>heme b</name>
        <dbReference type="ChEBI" id="CHEBI:60344"/>
        <label>b562</label>
    </ligand>
    <ligandPart>
        <name>Fe</name>
        <dbReference type="ChEBI" id="CHEBI:18248"/>
    </ligandPart>
</feature>
<feature type="binding site" description="axial binding residue" evidence="2">
    <location>
        <position position="97"/>
    </location>
    <ligand>
        <name>heme b</name>
        <dbReference type="ChEBI" id="CHEBI:60344"/>
        <label>b566</label>
    </ligand>
    <ligandPart>
        <name>Fe</name>
        <dbReference type="ChEBI" id="CHEBI:18248"/>
    </ligandPart>
</feature>
<feature type="binding site" description="axial binding residue" evidence="2">
    <location>
        <position position="182"/>
    </location>
    <ligand>
        <name>heme b</name>
        <dbReference type="ChEBI" id="CHEBI:60344"/>
        <label>b562</label>
    </ligand>
    <ligandPart>
        <name>Fe</name>
        <dbReference type="ChEBI" id="CHEBI:18248"/>
    </ligandPart>
</feature>
<feature type="binding site" description="axial binding residue" evidence="2">
    <location>
        <position position="196"/>
    </location>
    <ligand>
        <name>heme b</name>
        <dbReference type="ChEBI" id="CHEBI:60344"/>
        <label>b566</label>
    </ligand>
    <ligandPart>
        <name>Fe</name>
        <dbReference type="ChEBI" id="CHEBI:18248"/>
    </ligandPart>
</feature>
<feature type="binding site" evidence="2">
    <location>
        <position position="201"/>
    </location>
    <ligand>
        <name>a ubiquinone</name>
        <dbReference type="ChEBI" id="CHEBI:16389"/>
    </ligand>
</feature>
<feature type="sequence variant" description="In strain: Isolate TK 22845.">
    <original>M</original>
    <variation>V</variation>
    <location>
        <position position="129"/>
    </location>
</feature>
<protein>
    <recommendedName>
        <fullName>Cytochrome b</fullName>
    </recommendedName>
    <alternativeName>
        <fullName>Complex III subunit 3</fullName>
    </alternativeName>
    <alternativeName>
        <fullName>Complex III subunit III</fullName>
    </alternativeName>
    <alternativeName>
        <fullName>Cytochrome b-c1 complex subunit 3</fullName>
    </alternativeName>
    <alternativeName>
        <fullName>Ubiquinol-cytochrome-c reductase complex cytochrome b subunit</fullName>
    </alternativeName>
</protein>
<dbReference type="EMBL" id="AF338673">
    <property type="protein sequence ID" value="AAK21933.1"/>
    <property type="molecule type" value="Genomic_DNA"/>
</dbReference>
<dbReference type="EMBL" id="AF338674">
    <property type="protein sequence ID" value="AAK21934.1"/>
    <property type="molecule type" value="Genomic_DNA"/>
</dbReference>
<dbReference type="EMBL" id="AF338675">
    <property type="protein sequence ID" value="AAK21935.1"/>
    <property type="molecule type" value="Genomic_DNA"/>
</dbReference>
<dbReference type="SMR" id="Q9B0S2"/>
<dbReference type="GO" id="GO:0005743">
    <property type="term" value="C:mitochondrial inner membrane"/>
    <property type="evidence" value="ECO:0007669"/>
    <property type="project" value="UniProtKB-SubCell"/>
</dbReference>
<dbReference type="GO" id="GO:0045275">
    <property type="term" value="C:respiratory chain complex III"/>
    <property type="evidence" value="ECO:0007669"/>
    <property type="project" value="InterPro"/>
</dbReference>
<dbReference type="GO" id="GO:0046872">
    <property type="term" value="F:metal ion binding"/>
    <property type="evidence" value="ECO:0007669"/>
    <property type="project" value="UniProtKB-KW"/>
</dbReference>
<dbReference type="GO" id="GO:0008121">
    <property type="term" value="F:ubiquinol-cytochrome-c reductase activity"/>
    <property type="evidence" value="ECO:0007669"/>
    <property type="project" value="InterPro"/>
</dbReference>
<dbReference type="GO" id="GO:0006122">
    <property type="term" value="P:mitochondrial electron transport, ubiquinol to cytochrome c"/>
    <property type="evidence" value="ECO:0007669"/>
    <property type="project" value="TreeGrafter"/>
</dbReference>
<dbReference type="CDD" id="cd00290">
    <property type="entry name" value="cytochrome_b_C"/>
    <property type="match status" value="1"/>
</dbReference>
<dbReference type="CDD" id="cd00284">
    <property type="entry name" value="Cytochrome_b_N"/>
    <property type="match status" value="1"/>
</dbReference>
<dbReference type="FunFam" id="1.20.810.10:FF:000002">
    <property type="entry name" value="Cytochrome b"/>
    <property type="match status" value="1"/>
</dbReference>
<dbReference type="Gene3D" id="1.20.810.10">
    <property type="entry name" value="Cytochrome Bc1 Complex, Chain C"/>
    <property type="match status" value="1"/>
</dbReference>
<dbReference type="InterPro" id="IPR005798">
    <property type="entry name" value="Cyt_b/b6_C"/>
</dbReference>
<dbReference type="InterPro" id="IPR036150">
    <property type="entry name" value="Cyt_b/b6_C_sf"/>
</dbReference>
<dbReference type="InterPro" id="IPR005797">
    <property type="entry name" value="Cyt_b/b6_N"/>
</dbReference>
<dbReference type="InterPro" id="IPR027387">
    <property type="entry name" value="Cytb/b6-like_sf"/>
</dbReference>
<dbReference type="InterPro" id="IPR030689">
    <property type="entry name" value="Cytochrome_b"/>
</dbReference>
<dbReference type="InterPro" id="IPR048260">
    <property type="entry name" value="Cytochrome_b_C_euk/bac"/>
</dbReference>
<dbReference type="InterPro" id="IPR048259">
    <property type="entry name" value="Cytochrome_b_N_euk/bac"/>
</dbReference>
<dbReference type="InterPro" id="IPR016174">
    <property type="entry name" value="Di-haem_cyt_TM"/>
</dbReference>
<dbReference type="PANTHER" id="PTHR19271">
    <property type="entry name" value="CYTOCHROME B"/>
    <property type="match status" value="1"/>
</dbReference>
<dbReference type="PANTHER" id="PTHR19271:SF16">
    <property type="entry name" value="CYTOCHROME B"/>
    <property type="match status" value="1"/>
</dbReference>
<dbReference type="Pfam" id="PF00032">
    <property type="entry name" value="Cytochrom_B_C"/>
    <property type="match status" value="1"/>
</dbReference>
<dbReference type="Pfam" id="PF00033">
    <property type="entry name" value="Cytochrome_B"/>
    <property type="match status" value="1"/>
</dbReference>
<dbReference type="PIRSF" id="PIRSF038885">
    <property type="entry name" value="COB"/>
    <property type="match status" value="1"/>
</dbReference>
<dbReference type="SUPFAM" id="SSF81648">
    <property type="entry name" value="a domain/subunit of cytochrome bc1 complex (Ubiquinol-cytochrome c reductase)"/>
    <property type="match status" value="1"/>
</dbReference>
<dbReference type="SUPFAM" id="SSF81342">
    <property type="entry name" value="Transmembrane di-heme cytochromes"/>
    <property type="match status" value="1"/>
</dbReference>
<dbReference type="PROSITE" id="PS51003">
    <property type="entry name" value="CYTB_CTER"/>
    <property type="match status" value="1"/>
</dbReference>
<dbReference type="PROSITE" id="PS51002">
    <property type="entry name" value="CYTB_NTER"/>
    <property type="match status" value="1"/>
</dbReference>
<evidence type="ECO:0000250" key="1"/>
<evidence type="ECO:0000250" key="2">
    <source>
        <dbReference type="UniProtKB" id="P00157"/>
    </source>
</evidence>
<evidence type="ECO:0000255" key="3">
    <source>
        <dbReference type="PROSITE-ProRule" id="PRU00967"/>
    </source>
</evidence>
<evidence type="ECO:0000255" key="4">
    <source>
        <dbReference type="PROSITE-ProRule" id="PRU00968"/>
    </source>
</evidence>
<accession>Q9B0S2</accession>
<accession>Q9B369</accession>
<proteinExistence type="inferred from homology"/>
<organism>
    <name type="scientific">Pteronotus gymnonotus</name>
    <name type="common">Big naked-backed bat</name>
    <dbReference type="NCBI Taxonomy" id="118855"/>
    <lineage>
        <taxon>Eukaryota</taxon>
        <taxon>Metazoa</taxon>
        <taxon>Chordata</taxon>
        <taxon>Craniata</taxon>
        <taxon>Vertebrata</taxon>
        <taxon>Euteleostomi</taxon>
        <taxon>Mammalia</taxon>
        <taxon>Eutheria</taxon>
        <taxon>Laurasiatheria</taxon>
        <taxon>Chiroptera</taxon>
        <taxon>Yangochiroptera</taxon>
        <taxon>Mormoopidae</taxon>
        <taxon>Pteronotus</taxon>
    </lineage>
</organism>
<reference key="1">
    <citation type="journal article" date="2001" name="Mol. Phylogenet. Evol.">
        <title>Molecular systematics of the family Mormoopidae (Chiroptera) based on cytochrome b and recombination activating gene 2 sequences.</title>
        <authorList>
            <person name="Lewis-Oritt N."/>
            <person name="Porter C.A."/>
            <person name="Baker R.J."/>
        </authorList>
    </citation>
    <scope>NUCLEOTIDE SEQUENCE [GENOMIC DNA]</scope>
    <source>
        <strain>Isolate TK 38106 / CN104265</strain>
        <strain>Isolate TK 43081 / CN107925</strain>
        <strain>Isolate TK22845</strain>
    </source>
</reference>
<gene>
    <name type="primary">MT-CYB</name>
    <name type="synonym">COB</name>
    <name type="synonym">CYTB</name>
    <name type="synonym">MTCYB</name>
</gene>